<reference key="1">
    <citation type="submission" date="2005-06" db="EMBL/GenBank/DDBJ databases">
        <title>DNA sequences of macaque genes expressed in brain or testis and its evolutionary implications.</title>
        <authorList>
            <consortium name="International consortium for macaque cDNA sequencing and analysis"/>
        </authorList>
    </citation>
    <scope>NUCLEOTIDE SEQUENCE [LARGE SCALE MRNA]</scope>
    <source>
        <tissue>Testis</tissue>
    </source>
</reference>
<accession>Q4R8C8</accession>
<feature type="signal peptide" evidence="3">
    <location>
        <begin position="1"/>
        <end position="35"/>
    </location>
</feature>
<feature type="chain" id="PRO_0000282917" description="Transmembrane protein 59">
    <location>
        <begin position="36"/>
        <end position="323"/>
    </location>
</feature>
<feature type="topological domain" description="Extracellular" evidence="3">
    <location>
        <begin position="36"/>
        <end position="238"/>
    </location>
</feature>
<feature type="transmembrane region" description="Helical" evidence="3">
    <location>
        <begin position="239"/>
        <end position="259"/>
    </location>
</feature>
<feature type="topological domain" description="Cytoplasmic" evidence="3">
    <location>
        <begin position="260"/>
        <end position="323"/>
    </location>
</feature>
<feature type="short sequence motif" description="ATG16L1-binding motif" evidence="1">
    <location>
        <begin position="263"/>
        <end position="281"/>
    </location>
</feature>
<feature type="modified residue" description="Phosphothreonine" evidence="2">
    <location>
        <position position="303"/>
    </location>
</feature>
<feature type="glycosylation site" description="N-linked (GlcNAc...) asparagine" evidence="3">
    <location>
        <position position="90"/>
    </location>
</feature>
<sequence length="323" mass="36197">MAAPKESLWVRTQLGLPPLLLLTMALAGGSGTASAEAFDSVLGDTASCHRACQLTYPLHTYPKEEELYACQRGCRLFSICQFVDDGIDLNRTKLECESACTEAYSQSDEQYACHLGCQNQLPFAELRQEQLMSLMPKMHLLFPLTLVRSFWSDMMDSAQSFITSSWTFYLQADDGKIVIFQSKPEIQYAPHLEQESTNLRESSLSKMSYLQMRNSQAHRNFLEDGESDGFLRCLSLNSGWILTTTLVLSVMVLLWICCATVATAVEQYVPSEKLSICGDLEFMNEQKLNKYPASSLVVVRSKTEDHEEAGPLPTKVNLAHSEI</sequence>
<keyword id="KW-0072">Autophagy</keyword>
<keyword id="KW-1003">Cell membrane</keyword>
<keyword id="KW-0967">Endosome</keyword>
<keyword id="KW-0325">Glycoprotein</keyword>
<keyword id="KW-0333">Golgi apparatus</keyword>
<keyword id="KW-0458">Lysosome</keyword>
<keyword id="KW-0472">Membrane</keyword>
<keyword id="KW-0597">Phosphoprotein</keyword>
<keyword id="KW-1185">Reference proteome</keyword>
<keyword id="KW-0732">Signal</keyword>
<keyword id="KW-0812">Transmembrane</keyword>
<keyword id="KW-1133">Transmembrane helix</keyword>
<comment type="function">
    <text evidence="1">Acts as a regulator of autophagy in response to S.aureus infection by promoting activation of LC3 (MAP1LC3A, MAP1LC3B or MAP1LC3C). Acts by interacting with ATG16L1, leading to promote a functional complex between LC3 and ATG16L1 and promoting LC3 lipidation and subsequent activation of autophagy. Modulates the O-glycosylation and complex N-glycosylation steps occurring during the Golgi maturation of several proteins such as APP, BACE1, SEAP or PRNP. Inhibits APP transport to the cell surface and further shedding.</text>
</comment>
<comment type="subunit">
    <text evidence="1">Interacts with ATG16L1 (via WD repeats).</text>
</comment>
<comment type="subcellular location">
    <subcellularLocation>
        <location evidence="1">Late endosome membrane</location>
        <topology evidence="3">Single-pass type I membrane protein</topology>
    </subcellularLocation>
    <subcellularLocation>
        <location evidence="1">Lysosome membrane</location>
        <topology evidence="3">Single-pass type I membrane protein</topology>
    </subcellularLocation>
    <subcellularLocation>
        <location evidence="1">Cell membrane</location>
        <topology evidence="3">Single-pass type I membrane protein</topology>
    </subcellularLocation>
    <subcellularLocation>
        <location evidence="1">Golgi apparatus membrane</location>
        <topology evidence="3">Single-pass type I membrane protein</topology>
    </subcellularLocation>
    <text evidence="1">Mainly localizes to late endosomes/lysosomes. Probably first exported to the cell surface and then actively endocytosed to transiently localize in early endosomes on its way to the late endosomal/lysosomal compartment where it becomes quickly degraded.</text>
</comment>
<comment type="domain">
    <text evidence="1">The ATG16L1-binding motif mediates interaction with ATG16L1 and promotes autophagy.</text>
</comment>
<comment type="PTM">
    <text evidence="1">N-glycosylated.</text>
</comment>
<comment type="similarity">
    <text evidence="4">Belongs to the TMEM59 family.</text>
</comment>
<proteinExistence type="evidence at transcript level"/>
<evidence type="ECO:0000250" key="1">
    <source>
        <dbReference type="UniProtKB" id="Q9BXS4"/>
    </source>
</evidence>
<evidence type="ECO:0000250" key="2">
    <source>
        <dbReference type="UniProtKB" id="Q9QY73"/>
    </source>
</evidence>
<evidence type="ECO:0000255" key="3"/>
<evidence type="ECO:0000305" key="4"/>
<dbReference type="EMBL" id="AB168526">
    <property type="protein sequence ID" value="BAE00644.1"/>
    <property type="molecule type" value="mRNA"/>
</dbReference>
<dbReference type="RefSeq" id="NP_001270198.1">
    <property type="nucleotide sequence ID" value="NM_001283269.1"/>
</dbReference>
<dbReference type="STRING" id="9541.ENSMFAP00000020328"/>
<dbReference type="GlyCosmos" id="Q4R8C8">
    <property type="glycosylation" value="1 site, No reported glycans"/>
</dbReference>
<dbReference type="eggNOG" id="ENOG502QUIS">
    <property type="taxonomic scope" value="Eukaryota"/>
</dbReference>
<dbReference type="Proteomes" id="UP000233100">
    <property type="component" value="Unplaced"/>
</dbReference>
<dbReference type="GO" id="GO:0000139">
    <property type="term" value="C:Golgi membrane"/>
    <property type="evidence" value="ECO:0007669"/>
    <property type="project" value="UniProtKB-SubCell"/>
</dbReference>
<dbReference type="GO" id="GO:0005770">
    <property type="term" value="C:late endosome"/>
    <property type="evidence" value="ECO:0000250"/>
    <property type="project" value="UniProtKB"/>
</dbReference>
<dbReference type="GO" id="GO:0031902">
    <property type="term" value="C:late endosome membrane"/>
    <property type="evidence" value="ECO:0007669"/>
    <property type="project" value="UniProtKB-SubCell"/>
</dbReference>
<dbReference type="GO" id="GO:0005765">
    <property type="term" value="C:lysosomal membrane"/>
    <property type="evidence" value="ECO:0007669"/>
    <property type="project" value="UniProtKB-SubCell"/>
</dbReference>
<dbReference type="GO" id="GO:0005764">
    <property type="term" value="C:lysosome"/>
    <property type="evidence" value="ECO:0000250"/>
    <property type="project" value="UniProtKB"/>
</dbReference>
<dbReference type="GO" id="GO:0005886">
    <property type="term" value="C:plasma membrane"/>
    <property type="evidence" value="ECO:0007669"/>
    <property type="project" value="UniProtKB-SubCell"/>
</dbReference>
<dbReference type="GO" id="GO:0006914">
    <property type="term" value="P:autophagy"/>
    <property type="evidence" value="ECO:0007669"/>
    <property type="project" value="UniProtKB-KW"/>
</dbReference>
<dbReference type="GO" id="GO:0010508">
    <property type="term" value="P:positive regulation of autophagy"/>
    <property type="evidence" value="ECO:0000250"/>
    <property type="project" value="UniProtKB"/>
</dbReference>
<dbReference type="InterPro" id="IPR022065">
    <property type="entry name" value="Uncharacterised_TMEM59"/>
</dbReference>
<dbReference type="PANTHER" id="PTHR28652:SF3">
    <property type="entry name" value="TRANSMEMBRANE PROTEIN 59"/>
    <property type="match status" value="1"/>
</dbReference>
<dbReference type="PANTHER" id="PTHR28652">
    <property type="entry name" value="TRANSMEMBRANE PROTEIN 59-LIKE PROTEIN"/>
    <property type="match status" value="1"/>
</dbReference>
<dbReference type="Pfam" id="PF12280">
    <property type="entry name" value="BSMAP"/>
    <property type="match status" value="1"/>
</dbReference>
<protein>
    <recommendedName>
        <fullName>Transmembrane protein 59</fullName>
    </recommendedName>
</protein>
<gene>
    <name type="primary">TMEM59</name>
    <name type="ORF">QtsA-12783</name>
</gene>
<organism>
    <name type="scientific">Macaca fascicularis</name>
    <name type="common">Crab-eating macaque</name>
    <name type="synonym">Cynomolgus monkey</name>
    <dbReference type="NCBI Taxonomy" id="9541"/>
    <lineage>
        <taxon>Eukaryota</taxon>
        <taxon>Metazoa</taxon>
        <taxon>Chordata</taxon>
        <taxon>Craniata</taxon>
        <taxon>Vertebrata</taxon>
        <taxon>Euteleostomi</taxon>
        <taxon>Mammalia</taxon>
        <taxon>Eutheria</taxon>
        <taxon>Euarchontoglires</taxon>
        <taxon>Primates</taxon>
        <taxon>Haplorrhini</taxon>
        <taxon>Catarrhini</taxon>
        <taxon>Cercopithecidae</taxon>
        <taxon>Cercopithecinae</taxon>
        <taxon>Macaca</taxon>
    </lineage>
</organism>
<name>TMM59_MACFA</name>